<organism>
    <name type="scientific">Vespa magnifica</name>
    <name type="common">Hornet</name>
    <dbReference type="NCBI Taxonomy" id="202807"/>
    <lineage>
        <taxon>Eukaryota</taxon>
        <taxon>Metazoa</taxon>
        <taxon>Ecdysozoa</taxon>
        <taxon>Arthropoda</taxon>
        <taxon>Hexapoda</taxon>
        <taxon>Insecta</taxon>
        <taxon>Pterygota</taxon>
        <taxon>Neoptera</taxon>
        <taxon>Endopterygota</taxon>
        <taxon>Hymenoptera</taxon>
        <taxon>Apocrita</taxon>
        <taxon>Aculeata</taxon>
        <taxon>Vespoidea</taxon>
        <taxon>Vespidae</taxon>
        <taxon>Vespinae</taxon>
        <taxon>Vespa</taxon>
    </lineage>
</organism>
<reference key="1">
    <citation type="journal article" date="2006" name="Toxicon">
        <title>Two families of antimicrobial peptides from wasp (Vespa magnifica) venom.</title>
        <authorList>
            <person name="Xu X."/>
            <person name="Li J."/>
            <person name="Lu Q."/>
            <person name="Yang H."/>
            <person name="Zhang Y."/>
            <person name="Lai R."/>
        </authorList>
    </citation>
    <scope>PROTEIN SEQUENCE</scope>
    <scope>FUNCTION</scope>
    <scope>MASS SPECTROMETRY</scope>
    <scope>SUBCELLULAR LOCATION</scope>
    <source>
        <tissue>Venom</tissue>
    </source>
</reference>
<reference key="2">
    <citation type="journal article" date="2006" name="Peptides">
        <title>The mastoparanogen from wasp.</title>
        <authorList>
            <person name="Xu X."/>
            <person name="Yang H."/>
            <person name="Yu H."/>
            <person name="Li J."/>
            <person name="Lai R."/>
        </authorList>
    </citation>
    <scope>PROTEIN SEQUENCE</scope>
    <scope>FUNCTION</scope>
    <scope>AMIDATION AT LEU-14</scope>
    <scope>SUBCELLULAR LOCATION</scope>
</reference>
<protein>
    <recommendedName>
        <fullName evidence="5">Mastoparan-like peptide 12a</fullName>
    </recommendedName>
</protein>
<name>MASTA_VESMG</name>
<comment type="function">
    <text evidence="1 2 3 4">Antimicrobial and mast cell degranulating peptide. Shows antimicrobial activity against the Gram-negative bacteria E.coli ATCC 25922 (MIC=7.5 ug/ml), the Gram-positive bacteria S.aureus ATCC 2592 (MIC=3.7 ug/ml) and the fungus C.albicans ATCC 2002 (MIC=3.7 ug/ml). Has little hemolytic activity (PubMed:16330062, PubMed:17046111). Its mast cell degranulation activity may be related to the activation of G-protein coupled receptors in mast cells as well as interaction with other proteins located in cell endosomal membranes in the mast cells (By similarity).</text>
</comment>
<comment type="subcellular location">
    <subcellularLocation>
        <location evidence="3 4">Secreted</location>
    </subcellularLocation>
</comment>
<comment type="tissue specificity">
    <text evidence="7 8">Expressed by the venom gland.</text>
</comment>
<comment type="mass spectrometry" mass="1554.8" method="FAB" evidence="3"/>
<comment type="similarity">
    <text evidence="6">Belongs to the MCD family. Mastoparan subfamily.</text>
</comment>
<dbReference type="SMR" id="P0C1M4"/>
<dbReference type="GO" id="GO:0005576">
    <property type="term" value="C:extracellular region"/>
    <property type="evidence" value="ECO:0007669"/>
    <property type="project" value="UniProtKB-SubCell"/>
</dbReference>
<dbReference type="GO" id="GO:0090729">
    <property type="term" value="F:toxin activity"/>
    <property type="evidence" value="ECO:0007669"/>
    <property type="project" value="UniProtKB-KW"/>
</dbReference>
<dbReference type="GO" id="GO:0042742">
    <property type="term" value="P:defense response to bacterium"/>
    <property type="evidence" value="ECO:0007669"/>
    <property type="project" value="UniProtKB-KW"/>
</dbReference>
<dbReference type="GO" id="GO:0050832">
    <property type="term" value="P:defense response to fungus"/>
    <property type="evidence" value="ECO:0007669"/>
    <property type="project" value="UniProtKB-KW"/>
</dbReference>
<dbReference type="GO" id="GO:0045087">
    <property type="term" value="P:innate immune response"/>
    <property type="evidence" value="ECO:0007669"/>
    <property type="project" value="UniProtKB-KW"/>
</dbReference>
<dbReference type="GO" id="GO:0031640">
    <property type="term" value="P:killing of cells of another organism"/>
    <property type="evidence" value="ECO:0007669"/>
    <property type="project" value="UniProtKB-KW"/>
</dbReference>
<dbReference type="InterPro" id="IPR013213">
    <property type="entry name" value="Mastoparan"/>
</dbReference>
<dbReference type="Pfam" id="PF08249">
    <property type="entry name" value="Mastoparan"/>
    <property type="match status" value="1"/>
</dbReference>
<evidence type="ECO:0000250" key="1">
    <source>
        <dbReference type="UniProtKB" id="P01514"/>
    </source>
</evidence>
<evidence type="ECO:0000250" key="2">
    <source>
        <dbReference type="UniProtKB" id="P84914"/>
    </source>
</evidence>
<evidence type="ECO:0000269" key="3">
    <source>
    </source>
</evidence>
<evidence type="ECO:0000269" key="4">
    <source>
    </source>
</evidence>
<evidence type="ECO:0000303" key="5">
    <source>
    </source>
</evidence>
<evidence type="ECO:0000305" key="6"/>
<evidence type="ECO:0000305" key="7">
    <source>
    </source>
</evidence>
<evidence type="ECO:0000305" key="8">
    <source>
    </source>
</evidence>
<keyword id="KW-0027">Amidation</keyword>
<keyword id="KW-0044">Antibiotic</keyword>
<keyword id="KW-0929">Antimicrobial</keyword>
<keyword id="KW-0903">Direct protein sequencing</keyword>
<keyword id="KW-0295">Fungicide</keyword>
<keyword id="KW-1213">G-protein coupled receptor impairing toxin</keyword>
<keyword id="KW-0391">Immunity</keyword>
<keyword id="KW-0399">Innate immunity</keyword>
<keyword id="KW-0467">Mast cell degranulation</keyword>
<keyword id="KW-0964">Secreted</keyword>
<keyword id="KW-0800">Toxin</keyword>
<proteinExistence type="evidence at protein level"/>
<sequence length="14" mass="1557">INWKGIAAMAKKLL</sequence>
<feature type="peptide" id="PRO_0000246010" description="Mastoparan-like peptide 12a" evidence="3 4">
    <location>
        <begin position="1"/>
        <end position="14"/>
    </location>
</feature>
<feature type="modified residue" description="Leucine amide" evidence="4">
    <location>
        <position position="14"/>
    </location>
</feature>
<accession>P0C1M4</accession>